<evidence type="ECO:0000269" key="1">
    <source>
    </source>
</evidence>
<evidence type="ECO:0000303" key="2">
    <source>
    </source>
</evidence>
<evidence type="ECO:0000303" key="3">
    <source ref="4"/>
</evidence>
<evidence type="ECO:0000305" key="4"/>
<feature type="chain" id="PRO_0000064550" description="Aberrant root formation protein 4">
    <location>
        <begin position="1"/>
        <end position="626"/>
    </location>
</feature>
<feature type="splice variant" id="VSP_009626" description="In isoform 2." evidence="4">
    <original>N</original>
    <variation>V</variation>
    <location>
        <position position="246"/>
    </location>
</feature>
<feature type="splice variant" id="VSP_009627" description="In isoform 2." evidence="4">
    <location>
        <begin position="247"/>
        <end position="626"/>
    </location>
</feature>
<feature type="splice variant" id="VSP_009628" description="In isoform 3." evidence="2 3">
    <location>
        <begin position="426"/>
        <end position="449"/>
    </location>
</feature>
<reference key="1">
    <citation type="journal article" date="2004" name="Plant J.">
        <title>Arabidopsis ALF4 encodes a nuclear-localized protein required for lateral root formation.</title>
        <authorList>
            <person name="DiDonato R.J."/>
            <person name="Arbuckle E."/>
            <person name="Buker S."/>
            <person name="Sheets J."/>
            <person name="Tobar J."/>
            <person name="Totong R."/>
            <person name="Grisafi P."/>
            <person name="Fink G.R."/>
            <person name="Celenza J.L."/>
        </authorList>
    </citation>
    <scope>NUCLEOTIDE SEQUENCE (ISOFORMS 1 AND 2)</scope>
    <scope>ALTERNATIVE SPLICING</scope>
    <scope>FUNCTION</scope>
    <scope>SUBCELLULAR LOCATION</scope>
    <scope>TISSUE SPECIFICITY</scope>
</reference>
<reference key="2">
    <citation type="journal article" date="2000" name="Nature">
        <title>Sequence and analysis of chromosome 5 of the plant Arabidopsis thaliana.</title>
        <authorList>
            <person name="Tabata S."/>
            <person name="Kaneko T."/>
            <person name="Nakamura Y."/>
            <person name="Kotani H."/>
            <person name="Kato T."/>
            <person name="Asamizu E."/>
            <person name="Miyajima N."/>
            <person name="Sasamoto S."/>
            <person name="Kimura T."/>
            <person name="Hosouchi T."/>
            <person name="Kawashima K."/>
            <person name="Kohara M."/>
            <person name="Matsumoto M."/>
            <person name="Matsuno A."/>
            <person name="Muraki A."/>
            <person name="Nakayama S."/>
            <person name="Nakazaki N."/>
            <person name="Naruo K."/>
            <person name="Okumura S."/>
            <person name="Shinpo S."/>
            <person name="Takeuchi C."/>
            <person name="Wada T."/>
            <person name="Watanabe A."/>
            <person name="Yamada M."/>
            <person name="Yasuda M."/>
            <person name="Sato S."/>
            <person name="de la Bastide M."/>
            <person name="Huang E."/>
            <person name="Spiegel L."/>
            <person name="Gnoj L."/>
            <person name="O'Shaughnessy A."/>
            <person name="Preston R."/>
            <person name="Habermann K."/>
            <person name="Murray J."/>
            <person name="Johnson D."/>
            <person name="Rohlfing T."/>
            <person name="Nelson J."/>
            <person name="Stoneking T."/>
            <person name="Pepin K."/>
            <person name="Spieth J."/>
            <person name="Sekhon M."/>
            <person name="Armstrong J."/>
            <person name="Becker M."/>
            <person name="Belter E."/>
            <person name="Cordum H."/>
            <person name="Cordes M."/>
            <person name="Courtney L."/>
            <person name="Courtney W."/>
            <person name="Dante M."/>
            <person name="Du H."/>
            <person name="Edwards J."/>
            <person name="Fryman J."/>
            <person name="Haakensen B."/>
            <person name="Lamar E."/>
            <person name="Latreille P."/>
            <person name="Leonard S."/>
            <person name="Meyer R."/>
            <person name="Mulvaney E."/>
            <person name="Ozersky P."/>
            <person name="Riley A."/>
            <person name="Strowmatt C."/>
            <person name="Wagner-McPherson C."/>
            <person name="Wollam A."/>
            <person name="Yoakum M."/>
            <person name="Bell M."/>
            <person name="Dedhia N."/>
            <person name="Parnell L."/>
            <person name="Shah R."/>
            <person name="Rodriguez M."/>
            <person name="Hoon See L."/>
            <person name="Vil D."/>
            <person name="Baker J."/>
            <person name="Kirchoff K."/>
            <person name="Toth K."/>
            <person name="King L."/>
            <person name="Bahret A."/>
            <person name="Miller B."/>
            <person name="Marra M.A."/>
            <person name="Martienssen R."/>
            <person name="McCombie W.R."/>
            <person name="Wilson R.K."/>
            <person name="Murphy G."/>
            <person name="Bancroft I."/>
            <person name="Volckaert G."/>
            <person name="Wambutt R."/>
            <person name="Duesterhoeft A."/>
            <person name="Stiekema W."/>
            <person name="Pohl T."/>
            <person name="Entian K.-D."/>
            <person name="Terryn N."/>
            <person name="Hartley N."/>
            <person name="Bent E."/>
            <person name="Johnson S."/>
            <person name="Langham S.-A."/>
            <person name="McCullagh B."/>
            <person name="Robben J."/>
            <person name="Grymonprez B."/>
            <person name="Zimmermann W."/>
            <person name="Ramsperger U."/>
            <person name="Wedler H."/>
            <person name="Balke K."/>
            <person name="Wedler E."/>
            <person name="Peters S."/>
            <person name="van Staveren M."/>
            <person name="Dirkse W."/>
            <person name="Mooijman P."/>
            <person name="Klein Lankhorst R."/>
            <person name="Weitzenegger T."/>
            <person name="Bothe G."/>
            <person name="Rose M."/>
            <person name="Hauf J."/>
            <person name="Berneiser S."/>
            <person name="Hempel S."/>
            <person name="Feldpausch M."/>
            <person name="Lamberth S."/>
            <person name="Villarroel R."/>
            <person name="Gielen J."/>
            <person name="Ardiles W."/>
            <person name="Bents O."/>
            <person name="Lemcke K."/>
            <person name="Kolesov G."/>
            <person name="Mayer K.F.X."/>
            <person name="Rudd S."/>
            <person name="Schoof H."/>
            <person name="Schueller C."/>
            <person name="Zaccaria P."/>
            <person name="Mewes H.-W."/>
            <person name="Bevan M."/>
            <person name="Fransz P.F."/>
        </authorList>
    </citation>
    <scope>NUCLEOTIDE SEQUENCE [LARGE SCALE GENOMIC DNA]</scope>
    <source>
        <strain>cv. Columbia</strain>
    </source>
</reference>
<reference key="3">
    <citation type="journal article" date="2017" name="Plant J.">
        <title>Araport11: a complete reannotation of the Arabidopsis thaliana reference genome.</title>
        <authorList>
            <person name="Cheng C.Y."/>
            <person name="Krishnakumar V."/>
            <person name="Chan A.P."/>
            <person name="Thibaud-Nissen F."/>
            <person name="Schobel S."/>
            <person name="Town C.D."/>
        </authorList>
    </citation>
    <scope>GENOME REANNOTATION</scope>
    <source>
        <strain>cv. Columbia</strain>
    </source>
</reference>
<reference key="4">
    <citation type="submission" date="2006-07" db="EMBL/GenBank/DDBJ databases">
        <title>Large-scale analysis of RIKEN Arabidopsis full-length (RAFL) cDNAs.</title>
        <authorList>
            <person name="Totoki Y."/>
            <person name="Seki M."/>
            <person name="Ishida J."/>
            <person name="Nakajima M."/>
            <person name="Enju A."/>
            <person name="Kamiya A."/>
            <person name="Narusaka M."/>
            <person name="Shin-i T."/>
            <person name="Nakagawa M."/>
            <person name="Sakamoto N."/>
            <person name="Oishi K."/>
            <person name="Kohara Y."/>
            <person name="Kobayashi M."/>
            <person name="Toyoda A."/>
            <person name="Sakaki Y."/>
            <person name="Sakurai T."/>
            <person name="Iida K."/>
            <person name="Akiyama K."/>
            <person name="Satou M."/>
            <person name="Toyoda T."/>
            <person name="Konagaya A."/>
            <person name="Carninci P."/>
            <person name="Kawai J."/>
            <person name="Hayashizaki Y."/>
            <person name="Shinozaki K."/>
        </authorList>
    </citation>
    <scope>NUCLEOTIDE SEQUENCE [LARGE SCALE MRNA] OF 20-626 (ISOFORM 3)</scope>
    <source>
        <strain>cv. Columbia</strain>
    </source>
</reference>
<reference key="5">
    <citation type="journal article" date="2003" name="Science">
        <title>Empirical analysis of transcriptional activity in the Arabidopsis genome.</title>
        <authorList>
            <person name="Yamada K."/>
            <person name="Lim J."/>
            <person name="Dale J.M."/>
            <person name="Chen H."/>
            <person name="Shinn P."/>
            <person name="Palm C.J."/>
            <person name="Southwick A.M."/>
            <person name="Wu H.C."/>
            <person name="Kim C.J."/>
            <person name="Nguyen M."/>
            <person name="Pham P.K."/>
            <person name="Cheuk R.F."/>
            <person name="Karlin-Newmann G."/>
            <person name="Liu S.X."/>
            <person name="Lam B."/>
            <person name="Sakano H."/>
            <person name="Wu T."/>
            <person name="Yu G."/>
            <person name="Miranda M."/>
            <person name="Quach H.L."/>
            <person name="Tripp M."/>
            <person name="Chang C.H."/>
            <person name="Lee J.M."/>
            <person name="Toriumi M.J."/>
            <person name="Chan M.M."/>
            <person name="Tang C.C."/>
            <person name="Onodera C.S."/>
            <person name="Deng J.M."/>
            <person name="Akiyama K."/>
            <person name="Ansari Y."/>
            <person name="Arakawa T."/>
            <person name="Banh J."/>
            <person name="Banno F."/>
            <person name="Bowser L."/>
            <person name="Brooks S.Y."/>
            <person name="Carninci P."/>
            <person name="Chao Q."/>
            <person name="Choy N."/>
            <person name="Enju A."/>
            <person name="Goldsmith A.D."/>
            <person name="Gurjal M."/>
            <person name="Hansen N.F."/>
            <person name="Hayashizaki Y."/>
            <person name="Johnson-Hopson C."/>
            <person name="Hsuan V.W."/>
            <person name="Iida K."/>
            <person name="Karnes M."/>
            <person name="Khan S."/>
            <person name="Koesema E."/>
            <person name="Ishida J."/>
            <person name="Jiang P.X."/>
            <person name="Jones T."/>
            <person name="Kawai J."/>
            <person name="Kamiya A."/>
            <person name="Meyers C."/>
            <person name="Nakajima M."/>
            <person name="Narusaka M."/>
            <person name="Seki M."/>
            <person name="Sakurai T."/>
            <person name="Satou M."/>
            <person name="Tamse R."/>
            <person name="Vaysberg M."/>
            <person name="Wallender E.K."/>
            <person name="Wong C."/>
            <person name="Yamamura Y."/>
            <person name="Yuan S."/>
            <person name="Shinozaki K."/>
            <person name="Davis R.W."/>
            <person name="Theologis A."/>
            <person name="Ecker J.R."/>
        </authorList>
    </citation>
    <scope>NUCLEOTIDE SEQUENCE [LARGE SCALE MRNA] OF 25-626 (ISOFORM 3)</scope>
    <source>
        <strain>cv. Columbia</strain>
    </source>
</reference>
<dbReference type="EMBL" id="AL391222">
    <property type="protein sequence ID" value="CAC03451.1"/>
    <property type="status" value="ALT_SEQ"/>
    <property type="molecule type" value="Genomic_DNA"/>
</dbReference>
<dbReference type="EMBL" id="CP002688">
    <property type="protein sequence ID" value="AED91625.2"/>
    <property type="molecule type" value="Genomic_DNA"/>
</dbReference>
<dbReference type="EMBL" id="CP002688">
    <property type="protein sequence ID" value="AED91626.2"/>
    <property type="molecule type" value="Genomic_DNA"/>
</dbReference>
<dbReference type="EMBL" id="AK227498">
    <property type="protein sequence ID" value="BAE99498.1"/>
    <property type="status" value="ALT_INIT"/>
    <property type="molecule type" value="mRNA"/>
</dbReference>
<dbReference type="EMBL" id="BT004637">
    <property type="protein sequence ID" value="AAO42883.1"/>
    <property type="molecule type" value="mRNA"/>
</dbReference>
<dbReference type="PIR" id="T51792">
    <property type="entry name" value="T51792"/>
</dbReference>
<dbReference type="RefSeq" id="NP_001154704.2">
    <molecule id="Q84VX3-1"/>
    <property type="nucleotide sequence ID" value="NM_001161232.2"/>
</dbReference>
<dbReference type="RefSeq" id="NP_196664.4">
    <molecule id="Q84VX3-3"/>
    <property type="nucleotide sequence ID" value="NM_121141.5"/>
</dbReference>
<dbReference type="BioGRID" id="16248">
    <property type="interactions" value="7"/>
</dbReference>
<dbReference type="FunCoup" id="Q84VX3">
    <property type="interactions" value="1671"/>
</dbReference>
<dbReference type="IntAct" id="Q84VX3">
    <property type="interactions" value="5"/>
</dbReference>
<dbReference type="STRING" id="3702.Q84VX3"/>
<dbReference type="PaxDb" id="3702-AT5G11030.2"/>
<dbReference type="ProteomicsDB" id="244971">
    <molecule id="Q84VX3-1"/>
</dbReference>
<dbReference type="EnsemblPlants" id="AT5G11030.1">
    <molecule id="Q84VX3-3"/>
    <property type="protein sequence ID" value="AT5G11030.1"/>
    <property type="gene ID" value="AT5G11030"/>
</dbReference>
<dbReference type="EnsemblPlants" id="AT5G11030.2">
    <molecule id="Q84VX3-1"/>
    <property type="protein sequence ID" value="AT5G11030.2"/>
    <property type="gene ID" value="AT5G11030"/>
</dbReference>
<dbReference type="GeneID" id="830970"/>
<dbReference type="Gramene" id="AT5G11030.1">
    <molecule id="Q84VX3-3"/>
    <property type="protein sequence ID" value="AT5G11030.1"/>
    <property type="gene ID" value="AT5G11030"/>
</dbReference>
<dbReference type="Gramene" id="AT5G11030.2">
    <molecule id="Q84VX3-1"/>
    <property type="protein sequence ID" value="AT5G11030.2"/>
    <property type="gene ID" value="AT5G11030"/>
</dbReference>
<dbReference type="KEGG" id="ath:AT5G11030"/>
<dbReference type="Araport" id="AT5G11030"/>
<dbReference type="TAIR" id="AT5G11030">
    <property type="gene designation" value="ALF4"/>
</dbReference>
<dbReference type="eggNOG" id="ENOG502SGEH">
    <property type="taxonomic scope" value="Eukaryota"/>
</dbReference>
<dbReference type="HOGENOM" id="CLU_030067_0_0_1"/>
<dbReference type="InParanoid" id="Q84VX3"/>
<dbReference type="PhylomeDB" id="Q84VX3"/>
<dbReference type="PRO" id="PR:Q84VX3"/>
<dbReference type="Proteomes" id="UP000006548">
    <property type="component" value="Chromosome 5"/>
</dbReference>
<dbReference type="ExpressionAtlas" id="Q84VX3">
    <property type="expression patterns" value="baseline and differential"/>
</dbReference>
<dbReference type="GO" id="GO:0005634">
    <property type="term" value="C:nucleus"/>
    <property type="evidence" value="ECO:0007669"/>
    <property type="project" value="UniProtKB-SubCell"/>
</dbReference>
<dbReference type="InterPro" id="IPR016024">
    <property type="entry name" value="ARM-type_fold"/>
</dbReference>
<dbReference type="InterPro" id="IPR019516">
    <property type="entry name" value="Glomulin/ALF4"/>
</dbReference>
<dbReference type="InterPro" id="IPR013877">
    <property type="entry name" value="YAP-bd/ALF4/Glomulin"/>
</dbReference>
<dbReference type="PANTHER" id="PTHR15430">
    <property type="entry name" value="GLOMULIN"/>
    <property type="match status" value="1"/>
</dbReference>
<dbReference type="PANTHER" id="PTHR15430:SF1">
    <property type="entry name" value="GLOMULIN"/>
    <property type="match status" value="1"/>
</dbReference>
<dbReference type="Pfam" id="PF08568">
    <property type="entry name" value="Kinetochor_Ybp2"/>
    <property type="match status" value="1"/>
</dbReference>
<dbReference type="SUPFAM" id="SSF48371">
    <property type="entry name" value="ARM repeat"/>
    <property type="match status" value="1"/>
</dbReference>
<comment type="function">
    <text evidence="1">Required for the initiation of lateral roots independent from auxin signaling. May function in maintaining the pericycle in the mitotically competent state needed for lateral root formation.</text>
</comment>
<comment type="interaction">
    <interactant intactId="EBI-4439253">
        <id>Q84VX3</id>
    </interactant>
    <interactant intactId="EBI-4426557">
        <id>Q84MB2</id>
        <label>TIFY8</label>
    </interactant>
    <organismsDiffer>false</organismsDiffer>
    <experiments>3</experiments>
</comment>
<comment type="subcellular location">
    <subcellularLocation>
        <location evidence="1">Nucleus</location>
    </subcellularLocation>
</comment>
<comment type="alternative products">
    <event type="alternative splicing"/>
    <isoform>
        <id>Q84VX3-1</id>
        <name>1</name>
        <sequence type="displayed"/>
    </isoform>
    <isoform>
        <id>Q84VX3-2</id>
        <name>2</name>
        <name>ALF4deltaC</name>
        <name>DeltaC</name>
        <sequence type="described" ref="VSP_009626 VSP_009627"/>
    </isoform>
    <isoform>
        <id>Q84VX3-3</id>
        <name>3</name>
        <sequence type="described" ref="VSP_009628"/>
    </isoform>
</comment>
<comment type="tissue specificity">
    <text evidence="1">Widely expressed. Expressed throughout the root tip, stele and lateral primordia. Also expressed in the shoots.</text>
</comment>
<comment type="sequence caution" evidence="4">
    <conflict type="erroneous initiation">
        <sequence resource="EMBL-CDS" id="BAE99498"/>
    </conflict>
    <text>Truncated N-terminus.</text>
</comment>
<comment type="sequence caution" evidence="4">
    <conflict type="erroneous gene model prediction">
        <sequence resource="EMBL-CDS" id="CAC03451"/>
    </conflict>
</comment>
<keyword id="KW-0025">Alternative splicing</keyword>
<keyword id="KW-0217">Developmental protein</keyword>
<keyword id="KW-0539">Nucleus</keyword>
<keyword id="KW-1185">Reference proteome</keyword>
<gene>
    <name type="primary">ALF4</name>
    <name type="ordered locus">At5g11030</name>
    <name type="ORF">T5K6.20</name>
</gene>
<proteinExistence type="evidence at protein level"/>
<organism>
    <name type="scientific">Arabidopsis thaliana</name>
    <name type="common">Mouse-ear cress</name>
    <dbReference type="NCBI Taxonomy" id="3702"/>
    <lineage>
        <taxon>Eukaryota</taxon>
        <taxon>Viridiplantae</taxon>
        <taxon>Streptophyta</taxon>
        <taxon>Embryophyta</taxon>
        <taxon>Tracheophyta</taxon>
        <taxon>Spermatophyta</taxon>
        <taxon>Magnoliopsida</taxon>
        <taxon>eudicotyledons</taxon>
        <taxon>Gunneridae</taxon>
        <taxon>Pentapetalae</taxon>
        <taxon>rosids</taxon>
        <taxon>malvids</taxon>
        <taxon>Brassicales</taxon>
        <taxon>Brassicaceae</taxon>
        <taxon>Camelineae</taxon>
        <taxon>Arabidopsis</taxon>
    </lineage>
</organism>
<name>ALF4_ARATH</name>
<accession>Q84VX3</accession>
<accession>F4JWD7</accession>
<accession>F4JWD8</accession>
<accession>Q0WTQ0</accession>
<accession>Q9FY62</accession>
<protein>
    <recommendedName>
        <fullName>Aberrant root formation protein 4</fullName>
    </recommendedName>
</protein>
<sequence length="626" mass="69189">MVKFAIINTLTVNETWAKLKSFGVMESSIEGSSESTTVTTSPSRRVRELLALCFSSVEEAGGFQDFESFVTELVSCLDSLYENVALDANNELENDVIEEVLDEILKVLSSPQMDQDVIDALSFHLPKVTSKFADISSRCLQLVEEIVDRFVEACNPRDMLSILCEALDAARCYHSASTCSTPLLHGLSKVFILIQRRHYEQLKVAVPIVLNVLKDISLETDVQVEDLFDKALGIASSIRDVSSKLNNEEEAKVRCLLCLYVIQITAIISVSIRDKAASCIPLVIQLEPFLTSCGLTHLGLITGNDTEKLMSTVAGDDDEFITSFPDISLGASLLFICAKISHEVAEAANAVLGSVVDELQNNPVKRWQAYGMLKYILSSGDLLWEFKRHAIEFLLDITKGVTSSQCNDEQIDCSDYTPGIYATLQAVTLLIMYAPDADLRKKTFEALKRVLSDIPAPHRFDVLRALVTNSRSPSMTAILLGLVKDSMSKSSLQDTDCAAVDTHVIELVELVLRPPQGGPPLLPDQSDAILAALNLYRFALLFESRECEAGKERSKVGSDILSKKNLEKAYKEWLLPLRTLVSCSIAENLKEDHGQESSLDDVGLLNPIELVLYRCIELVEEKLKSH</sequence>